<sequence length="156" mass="18116">MAQKALEQTTVKEEKLELPTTIRGLAQLLDIPLVDCLLPCNFCGRFLDYLEVCEFDYKKLTLIWKDYSVYACCRLCCSATATYEFNVFYQQTVLGRDIELATGLSIFEIDIRCHTCLSFLDIIEKLDSCGRGLPFHKVRNAWKGVCRQCKHFYNDW</sequence>
<comment type="function">
    <text evidence="1">Plays a major role in the induction and maintenance of cellular transformation. E6 associates with host UBE3A/E6-AP ubiquitin-protein ligase and modulates its activity. Protects host keratinocytes from apoptosis by mediating the degradation of host BAK1. May also inhibit host immune response.</text>
</comment>
<comment type="subunit">
    <text evidence="1">Forms homodimers. Interacts with ubiquitin-protein ligase UBE3A/E6-AP; this interaction stimulates UBE3A ubiquitin activity. Interacts with host BAK1.</text>
</comment>
<comment type="subcellular location">
    <subcellularLocation>
        <location evidence="1">Host cytoplasm</location>
    </subcellularLocation>
    <subcellularLocation>
        <location evidence="1">Host nucleus</location>
    </subcellularLocation>
</comment>
<comment type="similarity">
    <text evidence="1 2">Belongs to the papillomaviridae E6 protein family.</text>
</comment>
<keyword id="KW-0010">Activator</keyword>
<keyword id="KW-0238">DNA-binding</keyword>
<keyword id="KW-0244">Early protein</keyword>
<keyword id="KW-1035">Host cytoplasm</keyword>
<keyword id="KW-1048">Host nucleus</keyword>
<keyword id="KW-0945">Host-virus interaction</keyword>
<keyword id="KW-1090">Inhibition of host innate immune response by virus</keyword>
<keyword id="KW-0479">Metal-binding</keyword>
<keyword id="KW-1119">Modulation of host cell apoptosis by virus</keyword>
<keyword id="KW-0804">Transcription</keyword>
<keyword id="KW-0805">Transcription regulation</keyword>
<keyword id="KW-0899">Viral immunoevasion</keyword>
<keyword id="KW-0862">Zinc</keyword>
<keyword id="KW-0863">Zinc-finger</keyword>
<gene>
    <name evidence="1" type="primary">E6</name>
</gene>
<name>VE6_HPV47</name>
<reference key="1">
    <citation type="journal article" date="1990" name="Virology">
        <title>Genome organization and taxonomic position of human papillomavirus type 47 inferred from its DNA sequence.</title>
        <authorList>
            <person name="Kiyono T."/>
            <person name="Adachi A."/>
            <person name="Ishibashi M."/>
        </authorList>
    </citation>
    <scope>NUCLEOTIDE SEQUENCE [GENOMIC DNA]</scope>
</reference>
<organismHost>
    <name type="scientific">Homo sapiens</name>
    <name type="common">Human</name>
    <dbReference type="NCBI Taxonomy" id="9606"/>
</organismHost>
<dbReference type="EMBL" id="M32305">
    <property type="protein sequence ID" value="AAA46976.1"/>
    <property type="molecule type" value="Genomic_DNA"/>
</dbReference>
<dbReference type="PIR" id="A35324">
    <property type="entry name" value="W6WL47"/>
</dbReference>
<dbReference type="SMR" id="P22422"/>
<dbReference type="Proteomes" id="UP000008697">
    <property type="component" value="Genome"/>
</dbReference>
<dbReference type="GO" id="GO:0030430">
    <property type="term" value="C:host cell cytoplasm"/>
    <property type="evidence" value="ECO:0007669"/>
    <property type="project" value="UniProtKB-SubCell"/>
</dbReference>
<dbReference type="GO" id="GO:0042025">
    <property type="term" value="C:host cell nucleus"/>
    <property type="evidence" value="ECO:0007669"/>
    <property type="project" value="UniProtKB-SubCell"/>
</dbReference>
<dbReference type="GO" id="GO:0003677">
    <property type="term" value="F:DNA binding"/>
    <property type="evidence" value="ECO:0007669"/>
    <property type="project" value="UniProtKB-UniRule"/>
</dbReference>
<dbReference type="GO" id="GO:0008270">
    <property type="term" value="F:zinc ion binding"/>
    <property type="evidence" value="ECO:0007669"/>
    <property type="project" value="UniProtKB-KW"/>
</dbReference>
<dbReference type="GO" id="GO:0006351">
    <property type="term" value="P:DNA-templated transcription"/>
    <property type="evidence" value="ECO:0007669"/>
    <property type="project" value="UniProtKB-UniRule"/>
</dbReference>
<dbReference type="GO" id="GO:0006355">
    <property type="term" value="P:regulation of DNA-templated transcription"/>
    <property type="evidence" value="ECO:0007669"/>
    <property type="project" value="UniProtKB-UniRule"/>
</dbReference>
<dbReference type="GO" id="GO:0052150">
    <property type="term" value="P:symbiont-mediated perturbation of host apoptosis"/>
    <property type="evidence" value="ECO:0007669"/>
    <property type="project" value="UniProtKB-KW"/>
</dbReference>
<dbReference type="GO" id="GO:0039648">
    <property type="term" value="P:symbiont-mediated perturbation of host ubiquitin-like protein modification"/>
    <property type="evidence" value="ECO:0007669"/>
    <property type="project" value="UniProtKB-UniRule"/>
</dbReference>
<dbReference type="GO" id="GO:0052170">
    <property type="term" value="P:symbiont-mediated suppression of host innate immune response"/>
    <property type="evidence" value="ECO:0007669"/>
    <property type="project" value="UniProtKB-KW"/>
</dbReference>
<dbReference type="GO" id="GO:0039502">
    <property type="term" value="P:symbiont-mediated suppression of host type I interferon-mediated signaling pathway"/>
    <property type="evidence" value="ECO:0007669"/>
    <property type="project" value="UniProtKB-UniRule"/>
</dbReference>
<dbReference type="Gene3D" id="3.30.240.40">
    <property type="entry name" value="E6 early regulatory protein"/>
    <property type="match status" value="2"/>
</dbReference>
<dbReference type="HAMAP" id="MF_04006">
    <property type="entry name" value="HPV_E6"/>
    <property type="match status" value="1"/>
</dbReference>
<dbReference type="InterPro" id="IPR001334">
    <property type="entry name" value="E6"/>
</dbReference>
<dbReference type="InterPro" id="IPR038575">
    <property type="entry name" value="E6_sf"/>
</dbReference>
<dbReference type="Pfam" id="PF00518">
    <property type="entry name" value="E6"/>
    <property type="match status" value="1"/>
</dbReference>
<dbReference type="SUPFAM" id="SSF161229">
    <property type="entry name" value="E6 C-terminal domain-like"/>
    <property type="match status" value="2"/>
</dbReference>
<accession>P22422</accession>
<feature type="chain" id="PRO_0000133365" description="Protein E6">
    <location>
        <begin position="1"/>
        <end position="156"/>
    </location>
</feature>
<feature type="zinc finger region" evidence="1">
    <location>
        <begin position="40"/>
        <end position="76"/>
    </location>
</feature>
<feature type="zinc finger region" evidence="1">
    <location>
        <begin position="113"/>
        <end position="149"/>
    </location>
</feature>
<proteinExistence type="inferred from homology"/>
<protein>
    <recommendedName>
        <fullName evidence="1">Protein E6</fullName>
    </recommendedName>
</protein>
<organism>
    <name type="scientific">Human papillomavirus 47</name>
    <dbReference type="NCBI Taxonomy" id="10594"/>
    <lineage>
        <taxon>Viruses</taxon>
        <taxon>Monodnaviria</taxon>
        <taxon>Shotokuvirae</taxon>
        <taxon>Cossaviricota</taxon>
        <taxon>Papovaviricetes</taxon>
        <taxon>Zurhausenvirales</taxon>
        <taxon>Papillomaviridae</taxon>
        <taxon>Firstpapillomavirinae</taxon>
        <taxon>Betapapillomavirus</taxon>
        <taxon>Betapapillomavirus 1</taxon>
    </lineage>
</organism>
<evidence type="ECO:0000255" key="1">
    <source>
        <dbReference type="HAMAP-Rule" id="MF_04006"/>
    </source>
</evidence>
<evidence type="ECO:0000305" key="2"/>